<reference key="1">
    <citation type="journal article" date="2006" name="Genome Res.">
        <title>Massive genome erosion and functional adaptations provide insights into the symbiotic lifestyle of Sodalis glossinidius in the tsetse host.</title>
        <authorList>
            <person name="Toh H."/>
            <person name="Weiss B.L."/>
            <person name="Perkin S.A.H."/>
            <person name="Yamashita A."/>
            <person name="Oshima K."/>
            <person name="Hattori M."/>
            <person name="Aksoy S."/>
        </authorList>
    </citation>
    <scope>NUCLEOTIDE SEQUENCE [LARGE SCALE GENOMIC DNA]</scope>
    <source>
        <strain>morsitans</strain>
    </source>
</reference>
<gene>
    <name evidence="1" type="primary">sthA</name>
    <name evidence="1" type="synonym">udhA</name>
    <name type="ordered locus">SG2157</name>
</gene>
<organism>
    <name type="scientific">Sodalis glossinidius (strain morsitans)</name>
    <dbReference type="NCBI Taxonomy" id="343509"/>
    <lineage>
        <taxon>Bacteria</taxon>
        <taxon>Pseudomonadati</taxon>
        <taxon>Pseudomonadota</taxon>
        <taxon>Gammaproteobacteria</taxon>
        <taxon>Enterobacterales</taxon>
        <taxon>Bruguierivoracaceae</taxon>
        <taxon>Sodalis</taxon>
    </lineage>
</organism>
<sequence>MQPKYDYDAIIIGSGPGGEGAAMGLTKRGARVAIIERYDNVGGGCTHWGTIPSKALRQAVSRIIEINQSPLHGNTRLPHTGFSDILCHADQVINQQTHMRQGFYERNHCQIFTGEASFVDEHQVQIHYGDNTTETLSAENIVIACGSRPYQPQDVDFDHPRIYDSDSILDLKHDPHHVIIYGAGVIGCEYASIFRGMNVKVDLINTRDRLLAFLDQEMSDALSYHFWENGVVIRHNEEYEEIKGLDDGVEVRFRSGKRMKADCLLYANGRTGNTDTLKLDKVELEADSRGLIKVNSMYQTAARHIYAVGDVIGYPSLASAAYDQGRIAAQVIIKGQANVQLIENIPTGIYTIPEISSVGKTEQELTAMKVPYEVGRAQFKHLARAQIVGMNVGSLKLLFHRETKQILGIHCFGERAAEIIHIGQAIMEQKGEGNTIEYFVNTTFNYPTMAEAYRVAALNGLNRLF</sequence>
<accession>Q2NQZ3</accession>
<keyword id="KW-0963">Cytoplasm</keyword>
<keyword id="KW-0274">FAD</keyword>
<keyword id="KW-0285">Flavoprotein</keyword>
<keyword id="KW-0520">NAD</keyword>
<keyword id="KW-0521">NADP</keyword>
<keyword id="KW-0560">Oxidoreductase</keyword>
<protein>
    <recommendedName>
        <fullName evidence="1">Soluble pyridine nucleotide transhydrogenase</fullName>
        <shortName evidence="1">STH</shortName>
        <ecNumber evidence="1">1.6.1.1</ecNumber>
    </recommendedName>
    <alternativeName>
        <fullName evidence="1">NAD(P)(+) transhydrogenase [B-specific]</fullName>
    </alternativeName>
</protein>
<dbReference type="EC" id="1.6.1.1" evidence="1"/>
<dbReference type="EMBL" id="AP008232">
    <property type="protein sequence ID" value="BAE75432.1"/>
    <property type="molecule type" value="Genomic_DNA"/>
</dbReference>
<dbReference type="RefSeq" id="WP_011411969.1">
    <property type="nucleotide sequence ID" value="NC_007712.1"/>
</dbReference>
<dbReference type="SMR" id="Q2NQZ3"/>
<dbReference type="STRING" id="343509.SG2157"/>
<dbReference type="KEGG" id="sgl:SG2157"/>
<dbReference type="eggNOG" id="COG1249">
    <property type="taxonomic scope" value="Bacteria"/>
</dbReference>
<dbReference type="HOGENOM" id="CLU_016755_0_0_6"/>
<dbReference type="OrthoDB" id="9800167at2"/>
<dbReference type="BioCyc" id="SGLO343509:SGP1_RS19925-MONOMER"/>
<dbReference type="Proteomes" id="UP000001932">
    <property type="component" value="Chromosome"/>
</dbReference>
<dbReference type="GO" id="GO:0005829">
    <property type="term" value="C:cytosol"/>
    <property type="evidence" value="ECO:0007669"/>
    <property type="project" value="TreeGrafter"/>
</dbReference>
<dbReference type="GO" id="GO:0004148">
    <property type="term" value="F:dihydrolipoyl dehydrogenase (NADH) activity"/>
    <property type="evidence" value="ECO:0007669"/>
    <property type="project" value="TreeGrafter"/>
</dbReference>
<dbReference type="GO" id="GO:0050660">
    <property type="term" value="F:flavin adenine dinucleotide binding"/>
    <property type="evidence" value="ECO:0007669"/>
    <property type="project" value="TreeGrafter"/>
</dbReference>
<dbReference type="GO" id="GO:0003957">
    <property type="term" value="F:NAD(P)+ transhydrogenase (Si-specific) activity"/>
    <property type="evidence" value="ECO:0007669"/>
    <property type="project" value="UniProtKB-UniRule"/>
</dbReference>
<dbReference type="GO" id="GO:0006103">
    <property type="term" value="P:2-oxoglutarate metabolic process"/>
    <property type="evidence" value="ECO:0007669"/>
    <property type="project" value="TreeGrafter"/>
</dbReference>
<dbReference type="GO" id="GO:0006739">
    <property type="term" value="P:NADP metabolic process"/>
    <property type="evidence" value="ECO:0007669"/>
    <property type="project" value="UniProtKB-UniRule"/>
</dbReference>
<dbReference type="FunFam" id="3.30.390.30:FF:000002">
    <property type="entry name" value="Soluble pyridine nucleotide transhydrogenase"/>
    <property type="match status" value="1"/>
</dbReference>
<dbReference type="FunFam" id="3.50.50.60:FF:000008">
    <property type="entry name" value="Soluble pyridine nucleotide transhydrogenase"/>
    <property type="match status" value="1"/>
</dbReference>
<dbReference type="Gene3D" id="3.30.390.30">
    <property type="match status" value="1"/>
</dbReference>
<dbReference type="Gene3D" id="3.50.50.60">
    <property type="entry name" value="FAD/NAD(P)-binding domain"/>
    <property type="match status" value="2"/>
</dbReference>
<dbReference type="HAMAP" id="MF_00247">
    <property type="entry name" value="SthA"/>
    <property type="match status" value="1"/>
</dbReference>
<dbReference type="InterPro" id="IPR050151">
    <property type="entry name" value="Class-I_Pyr_Nuc-Dis_Oxidored"/>
</dbReference>
<dbReference type="InterPro" id="IPR036188">
    <property type="entry name" value="FAD/NAD-bd_sf"/>
</dbReference>
<dbReference type="InterPro" id="IPR023753">
    <property type="entry name" value="FAD/NAD-binding_dom"/>
</dbReference>
<dbReference type="InterPro" id="IPR016156">
    <property type="entry name" value="FAD/NAD-linked_Rdtase_dimer_sf"/>
</dbReference>
<dbReference type="InterPro" id="IPR001100">
    <property type="entry name" value="Pyr_nuc-diS_OxRdtase"/>
</dbReference>
<dbReference type="InterPro" id="IPR004099">
    <property type="entry name" value="Pyr_nucl-diS_OxRdtase_dimer"/>
</dbReference>
<dbReference type="InterPro" id="IPR022962">
    <property type="entry name" value="STH_gammaproteobact"/>
</dbReference>
<dbReference type="NCBIfam" id="NF003585">
    <property type="entry name" value="PRK05249.1"/>
    <property type="match status" value="1"/>
</dbReference>
<dbReference type="PANTHER" id="PTHR22912">
    <property type="entry name" value="DISULFIDE OXIDOREDUCTASE"/>
    <property type="match status" value="1"/>
</dbReference>
<dbReference type="PANTHER" id="PTHR22912:SF93">
    <property type="entry name" value="SOLUBLE PYRIDINE NUCLEOTIDE TRANSHYDROGENASE"/>
    <property type="match status" value="1"/>
</dbReference>
<dbReference type="Pfam" id="PF07992">
    <property type="entry name" value="Pyr_redox_2"/>
    <property type="match status" value="1"/>
</dbReference>
<dbReference type="Pfam" id="PF02852">
    <property type="entry name" value="Pyr_redox_dim"/>
    <property type="match status" value="1"/>
</dbReference>
<dbReference type="PIRSF" id="PIRSF000350">
    <property type="entry name" value="Mercury_reductase_MerA"/>
    <property type="match status" value="1"/>
</dbReference>
<dbReference type="PRINTS" id="PR00368">
    <property type="entry name" value="FADPNR"/>
</dbReference>
<dbReference type="PRINTS" id="PR00411">
    <property type="entry name" value="PNDRDTASEI"/>
</dbReference>
<dbReference type="SUPFAM" id="SSF51905">
    <property type="entry name" value="FAD/NAD(P)-binding domain"/>
    <property type="match status" value="1"/>
</dbReference>
<dbReference type="SUPFAM" id="SSF55424">
    <property type="entry name" value="FAD/NAD-linked reductases, dimerisation (C-terminal) domain"/>
    <property type="match status" value="1"/>
</dbReference>
<proteinExistence type="inferred from homology"/>
<comment type="function">
    <text evidence="1">Conversion of NADPH, generated by peripheral catabolic pathways, to NADH, which can enter the respiratory chain for energy generation.</text>
</comment>
<comment type="catalytic activity">
    <reaction evidence="1">
        <text>NAD(+) + NADPH = NADH + NADP(+)</text>
        <dbReference type="Rhea" id="RHEA:11692"/>
        <dbReference type="ChEBI" id="CHEBI:57540"/>
        <dbReference type="ChEBI" id="CHEBI:57783"/>
        <dbReference type="ChEBI" id="CHEBI:57945"/>
        <dbReference type="ChEBI" id="CHEBI:58349"/>
        <dbReference type="EC" id="1.6.1.1"/>
    </reaction>
</comment>
<comment type="cofactor">
    <cofactor evidence="1">
        <name>FAD</name>
        <dbReference type="ChEBI" id="CHEBI:57692"/>
    </cofactor>
    <text evidence="1">Binds 1 FAD per subunit.</text>
</comment>
<comment type="subcellular location">
    <subcellularLocation>
        <location evidence="1">Cytoplasm</location>
    </subcellularLocation>
</comment>
<comment type="similarity">
    <text evidence="1">Belongs to the class-I pyridine nucleotide-disulfide oxidoreductase family.</text>
</comment>
<name>STHA_SODGM</name>
<feature type="chain" id="PRO_0000260244" description="Soluble pyridine nucleotide transhydrogenase">
    <location>
        <begin position="1"/>
        <end position="465"/>
    </location>
</feature>
<feature type="binding site" evidence="1">
    <location>
        <begin position="36"/>
        <end position="45"/>
    </location>
    <ligand>
        <name>FAD</name>
        <dbReference type="ChEBI" id="CHEBI:57692"/>
    </ligand>
</feature>
<evidence type="ECO:0000255" key="1">
    <source>
        <dbReference type="HAMAP-Rule" id="MF_00247"/>
    </source>
</evidence>